<gene>
    <name evidence="1" type="primary">pepA</name>
    <name type="ordered locus">SG2109</name>
</gene>
<keyword id="KW-0031">Aminopeptidase</keyword>
<keyword id="KW-0963">Cytoplasm</keyword>
<keyword id="KW-0378">Hydrolase</keyword>
<keyword id="KW-0464">Manganese</keyword>
<keyword id="KW-0479">Metal-binding</keyword>
<keyword id="KW-0645">Protease</keyword>
<dbReference type="EC" id="3.4.11.1" evidence="1"/>
<dbReference type="EC" id="3.4.11.10" evidence="1"/>
<dbReference type="EMBL" id="AP008232">
    <property type="protein sequence ID" value="BAE75384.1"/>
    <property type="molecule type" value="Genomic_DNA"/>
</dbReference>
<dbReference type="RefSeq" id="WP_011411921.1">
    <property type="nucleotide sequence ID" value="NC_007712.1"/>
</dbReference>
<dbReference type="SMR" id="Q2NR41"/>
<dbReference type="STRING" id="343509.SG2109"/>
<dbReference type="MEROPS" id="M17.003"/>
<dbReference type="KEGG" id="sgl:SG2109"/>
<dbReference type="eggNOG" id="COG0260">
    <property type="taxonomic scope" value="Bacteria"/>
</dbReference>
<dbReference type="HOGENOM" id="CLU_013734_0_0_6"/>
<dbReference type="OrthoDB" id="9809354at2"/>
<dbReference type="BioCyc" id="SGLO343509:SGP1_RS19445-MONOMER"/>
<dbReference type="Proteomes" id="UP000001932">
    <property type="component" value="Chromosome"/>
</dbReference>
<dbReference type="GO" id="GO:0005737">
    <property type="term" value="C:cytoplasm"/>
    <property type="evidence" value="ECO:0007669"/>
    <property type="project" value="UniProtKB-SubCell"/>
</dbReference>
<dbReference type="GO" id="GO:0030145">
    <property type="term" value="F:manganese ion binding"/>
    <property type="evidence" value="ECO:0007669"/>
    <property type="project" value="UniProtKB-UniRule"/>
</dbReference>
<dbReference type="GO" id="GO:0070006">
    <property type="term" value="F:metalloaminopeptidase activity"/>
    <property type="evidence" value="ECO:0007669"/>
    <property type="project" value="InterPro"/>
</dbReference>
<dbReference type="GO" id="GO:0006508">
    <property type="term" value="P:proteolysis"/>
    <property type="evidence" value="ECO:0007669"/>
    <property type="project" value="UniProtKB-KW"/>
</dbReference>
<dbReference type="CDD" id="cd00433">
    <property type="entry name" value="Peptidase_M17"/>
    <property type="match status" value="1"/>
</dbReference>
<dbReference type="FunFam" id="3.40.220.10:FF:000001">
    <property type="entry name" value="Probable cytosol aminopeptidase"/>
    <property type="match status" value="1"/>
</dbReference>
<dbReference type="FunFam" id="3.40.630.10:FF:000004">
    <property type="entry name" value="Probable cytosol aminopeptidase"/>
    <property type="match status" value="1"/>
</dbReference>
<dbReference type="Gene3D" id="3.40.220.10">
    <property type="entry name" value="Leucine Aminopeptidase, subunit E, domain 1"/>
    <property type="match status" value="1"/>
</dbReference>
<dbReference type="Gene3D" id="3.40.630.10">
    <property type="entry name" value="Zn peptidases"/>
    <property type="match status" value="1"/>
</dbReference>
<dbReference type="HAMAP" id="MF_00181">
    <property type="entry name" value="Cytosol_peptidase_M17"/>
    <property type="match status" value="1"/>
</dbReference>
<dbReference type="InterPro" id="IPR011356">
    <property type="entry name" value="Leucine_aapep/pepB"/>
</dbReference>
<dbReference type="InterPro" id="IPR043472">
    <property type="entry name" value="Macro_dom-like"/>
</dbReference>
<dbReference type="InterPro" id="IPR000819">
    <property type="entry name" value="Peptidase_M17_C"/>
</dbReference>
<dbReference type="InterPro" id="IPR023042">
    <property type="entry name" value="Peptidase_M17_leu_NH2_pept"/>
</dbReference>
<dbReference type="InterPro" id="IPR008283">
    <property type="entry name" value="Peptidase_M17_N"/>
</dbReference>
<dbReference type="NCBIfam" id="NF002072">
    <property type="entry name" value="PRK00913.1-1"/>
    <property type="match status" value="1"/>
</dbReference>
<dbReference type="NCBIfam" id="NF002074">
    <property type="entry name" value="PRK00913.1-4"/>
    <property type="match status" value="1"/>
</dbReference>
<dbReference type="PANTHER" id="PTHR11963:SF23">
    <property type="entry name" value="CYTOSOL AMINOPEPTIDASE"/>
    <property type="match status" value="1"/>
</dbReference>
<dbReference type="PANTHER" id="PTHR11963">
    <property type="entry name" value="LEUCINE AMINOPEPTIDASE-RELATED"/>
    <property type="match status" value="1"/>
</dbReference>
<dbReference type="Pfam" id="PF00883">
    <property type="entry name" value="Peptidase_M17"/>
    <property type="match status" value="1"/>
</dbReference>
<dbReference type="Pfam" id="PF02789">
    <property type="entry name" value="Peptidase_M17_N"/>
    <property type="match status" value="1"/>
</dbReference>
<dbReference type="PRINTS" id="PR00481">
    <property type="entry name" value="LAMNOPPTDASE"/>
</dbReference>
<dbReference type="SUPFAM" id="SSF52949">
    <property type="entry name" value="Macro domain-like"/>
    <property type="match status" value="1"/>
</dbReference>
<dbReference type="SUPFAM" id="SSF53187">
    <property type="entry name" value="Zn-dependent exopeptidases"/>
    <property type="match status" value="1"/>
</dbReference>
<dbReference type="PROSITE" id="PS00631">
    <property type="entry name" value="CYTOSOL_AP"/>
    <property type="match status" value="1"/>
</dbReference>
<reference key="1">
    <citation type="journal article" date="2006" name="Genome Res.">
        <title>Massive genome erosion and functional adaptations provide insights into the symbiotic lifestyle of Sodalis glossinidius in the tsetse host.</title>
        <authorList>
            <person name="Toh H."/>
            <person name="Weiss B.L."/>
            <person name="Perkin S.A.H."/>
            <person name="Yamashita A."/>
            <person name="Oshima K."/>
            <person name="Hattori M."/>
            <person name="Aksoy S."/>
        </authorList>
    </citation>
    <scope>NUCLEOTIDE SEQUENCE [LARGE SCALE GENOMIC DNA]</scope>
    <source>
        <strain>morsitans</strain>
    </source>
</reference>
<comment type="function">
    <text evidence="1">Presumably involved in the processing and regular turnover of intracellular proteins. Catalyzes the removal of unsubstituted N-terminal amino acids from various peptides.</text>
</comment>
<comment type="catalytic activity">
    <reaction evidence="1">
        <text>Release of an N-terminal amino acid, Xaa-|-Yaa-, in which Xaa is preferably Leu, but may be other amino acids including Pro although not Arg or Lys, and Yaa may be Pro. Amino acid amides and methyl esters are also readily hydrolyzed, but rates on arylamides are exceedingly low.</text>
        <dbReference type="EC" id="3.4.11.1"/>
    </reaction>
</comment>
<comment type="catalytic activity">
    <reaction evidence="1">
        <text>Release of an N-terminal amino acid, preferentially leucine, but not glutamic or aspartic acids.</text>
        <dbReference type="EC" id="3.4.11.10"/>
    </reaction>
</comment>
<comment type="cofactor">
    <cofactor evidence="1">
        <name>Mn(2+)</name>
        <dbReference type="ChEBI" id="CHEBI:29035"/>
    </cofactor>
    <text evidence="1">Binds 2 manganese ions per subunit.</text>
</comment>
<comment type="subcellular location">
    <subcellularLocation>
        <location evidence="1">Cytoplasm</location>
    </subcellularLocation>
</comment>
<comment type="similarity">
    <text evidence="1">Belongs to the peptidase M17 family.</text>
</comment>
<feature type="chain" id="PRO_1000019985" description="Probable cytosol aminopeptidase">
    <location>
        <begin position="1"/>
        <end position="503"/>
    </location>
</feature>
<feature type="active site" evidence="1">
    <location>
        <position position="282"/>
    </location>
</feature>
<feature type="active site" evidence="1">
    <location>
        <position position="356"/>
    </location>
</feature>
<feature type="binding site" evidence="1">
    <location>
        <position position="270"/>
    </location>
    <ligand>
        <name>Mn(2+)</name>
        <dbReference type="ChEBI" id="CHEBI:29035"/>
        <label>2</label>
    </ligand>
</feature>
<feature type="binding site" evidence="1">
    <location>
        <position position="275"/>
    </location>
    <ligand>
        <name>Mn(2+)</name>
        <dbReference type="ChEBI" id="CHEBI:29035"/>
        <label>1</label>
    </ligand>
</feature>
<feature type="binding site" evidence="1">
    <location>
        <position position="275"/>
    </location>
    <ligand>
        <name>Mn(2+)</name>
        <dbReference type="ChEBI" id="CHEBI:29035"/>
        <label>2</label>
    </ligand>
</feature>
<feature type="binding site" evidence="1">
    <location>
        <position position="293"/>
    </location>
    <ligand>
        <name>Mn(2+)</name>
        <dbReference type="ChEBI" id="CHEBI:29035"/>
        <label>2</label>
    </ligand>
</feature>
<feature type="binding site" evidence="1">
    <location>
        <position position="352"/>
    </location>
    <ligand>
        <name>Mn(2+)</name>
        <dbReference type="ChEBI" id="CHEBI:29035"/>
        <label>1</label>
    </ligand>
</feature>
<feature type="binding site" evidence="1">
    <location>
        <position position="354"/>
    </location>
    <ligand>
        <name>Mn(2+)</name>
        <dbReference type="ChEBI" id="CHEBI:29035"/>
        <label>1</label>
    </ligand>
</feature>
<feature type="binding site" evidence="1">
    <location>
        <position position="354"/>
    </location>
    <ligand>
        <name>Mn(2+)</name>
        <dbReference type="ChEBI" id="CHEBI:29035"/>
        <label>2</label>
    </ligand>
</feature>
<name>AMPA_SODGM</name>
<proteinExistence type="inferred from homology"/>
<sequence>MEFSVKSGSPEKQRSACIVVGVFEPRRLSPIAEQLDKISDGYISTLLRRGELEGKVGQTLLLHHVPNVLSERILLIGCGKERELDERQYKQVINKTINTLNDTGSMEAVCFLTELHVKGRNTYWKVRQAVETAKETLYTFDQLKSNKIEPRRPLRKMVFNVPTRRELTSGERAISHGLAIAAGIKAAKDLGNMPPNICNPAYLASQARQLADGYGKTTTTRVIGEQQMKELGMNAYLAVGQGSANESLMSVIEYKGSPDADARPIVLVGKGLTFDAGGISIKPADSMDEMKYDMCGAATVYGVMRMAMELNLPLNIVGVLAGCENMVDGRAFRPGDVLTTLSGQTVEVLNTDAEGRLVLCDALTYVERFEPEVVIDVATLTGACVIALGHHLTGLVSNHNPLAHELIGAAEQAGDRAWRLPLGDEFQEQLESNFADMANIGGRPGGAITAGCFLSRFARKYNWAHLDIAGTAWRSGKAKGATGRPVAMLSQFLLNRTGLNGDE</sequence>
<accession>Q2NR41</accession>
<organism>
    <name type="scientific">Sodalis glossinidius (strain morsitans)</name>
    <dbReference type="NCBI Taxonomy" id="343509"/>
    <lineage>
        <taxon>Bacteria</taxon>
        <taxon>Pseudomonadati</taxon>
        <taxon>Pseudomonadota</taxon>
        <taxon>Gammaproteobacteria</taxon>
        <taxon>Enterobacterales</taxon>
        <taxon>Bruguierivoracaceae</taxon>
        <taxon>Sodalis</taxon>
    </lineage>
</organism>
<protein>
    <recommendedName>
        <fullName evidence="1">Probable cytosol aminopeptidase</fullName>
        <ecNumber evidence="1">3.4.11.1</ecNumber>
    </recommendedName>
    <alternativeName>
        <fullName evidence="1">Leucine aminopeptidase</fullName>
        <shortName evidence="1">LAP</shortName>
        <ecNumber evidence="1">3.4.11.10</ecNumber>
    </alternativeName>
    <alternativeName>
        <fullName evidence="1">Leucyl aminopeptidase</fullName>
    </alternativeName>
</protein>
<evidence type="ECO:0000255" key="1">
    <source>
        <dbReference type="HAMAP-Rule" id="MF_00181"/>
    </source>
</evidence>